<organism>
    <name type="scientific">Azotobacter vinelandii</name>
    <dbReference type="NCBI Taxonomy" id="354"/>
    <lineage>
        <taxon>Bacteria</taxon>
        <taxon>Pseudomonadati</taxon>
        <taxon>Pseudomonadota</taxon>
        <taxon>Gammaproteobacteria</taxon>
        <taxon>Pseudomonadales</taxon>
        <taxon>Pseudomonadaceae</taxon>
        <taxon>Azotobacter</taxon>
    </lineage>
</organism>
<gene>
    <name type="primary">hoxT</name>
</gene>
<comment type="similarity">
    <text evidence="1">Belongs to the HupJ family.</text>
</comment>
<proteinExistence type="inferred from homology"/>
<evidence type="ECO:0000305" key="1"/>
<dbReference type="EMBL" id="M80522">
    <property type="protein sequence ID" value="AAA22131.1"/>
    <property type="molecule type" value="Genomic_DNA"/>
</dbReference>
<dbReference type="EMBL" id="X63778">
    <property type="protein sequence ID" value="CAA45312.1"/>
    <property type="molecule type" value="Genomic_DNA"/>
</dbReference>
<dbReference type="EMBL" id="L23970">
    <property type="protein sequence ID" value="AAA19506.1"/>
    <property type="molecule type" value="Unassigned_DNA"/>
</dbReference>
<dbReference type="PIR" id="S21767">
    <property type="entry name" value="S21767"/>
</dbReference>
<dbReference type="SMR" id="P30781"/>
<dbReference type="OMA" id="IVTPWFM"/>
<dbReference type="Gene3D" id="3.30.1460.40">
    <property type="entry name" value="[NiFe]-hydrogenase assembly chaperone, HybE"/>
    <property type="match status" value="1"/>
</dbReference>
<dbReference type="InterPro" id="IPR023994">
    <property type="entry name" value="NiFe-hyd_HybE"/>
</dbReference>
<dbReference type="InterPro" id="IPR038530">
    <property type="entry name" value="NiFe-hyd_HybE_sf"/>
</dbReference>
<dbReference type="NCBIfam" id="TIGR03993">
    <property type="entry name" value="hydrog_HybE"/>
    <property type="match status" value="1"/>
</dbReference>
<dbReference type="Pfam" id="PF11939">
    <property type="entry name" value="NiFe-hyd_HybE"/>
    <property type="match status" value="1"/>
</dbReference>
<accession>P30781</accession>
<name>HOXT_AZOVI</name>
<feature type="chain" id="PRO_0000201423" description="Hydrogenase expression/formation protein HoxT">
    <location>
        <begin position="1"/>
        <end position="153"/>
    </location>
</feature>
<protein>
    <recommendedName>
        <fullName>Hydrogenase expression/formation protein HoxT</fullName>
    </recommendedName>
</protein>
<reference key="1">
    <citation type="journal article" date="1992" name="Biochim. Biophys. Acta">
        <title>Two open reading frames (ORFs) identified near the hydrogenase structural genes in Azotobacter vinelandii, the first ORF may encode for a polypeptide similar to rubredoxins.</title>
        <authorList>
            <person name="Chen J.C."/>
            <person name="Mortenson L.E."/>
        </authorList>
    </citation>
    <scope>NUCLEOTIDE SEQUENCE [GENOMIC DNA]</scope>
    <source>
        <strain>ATCC 13705 / OP1 / DSM 366 / NCIMB 11614 / LMG 3878 / UW</strain>
    </source>
</reference>
<reference key="2">
    <citation type="journal article" date="1992" name="J. Bacteriol.">
        <title>Nucleotide sequences and genetic analysis of hydrogen oxidation (hox) genes in Azotobacter vinelandii.</title>
        <authorList>
            <person name="Menon A."/>
            <person name="Mortenson L.E."/>
            <person name="Robson R.L."/>
        </authorList>
    </citation>
    <scope>NUCLEOTIDE SEQUENCE [GENOMIC DNA]</scope>
    <source>
        <strain>ATCC 13705 / OP1 / DSM 366 / NCIMB 11614 / LMG 3878 / UW</strain>
    </source>
</reference>
<sequence>MHGREAIEAHYRVAGARMAGLPVYNPALTVELLGWRAVEGVGALGVLITPWCMNLFWQPPADAELPASGERAVLSLPSGDYECTLHEDERLGRHASASLCSPMQDFPGQAEARAMAGEVLRLILAVPEAGPEPSRSGLLSRRALFRRALGGAS</sequence>